<reference key="1">
    <citation type="journal article" date="1998" name="Nature">
        <title>Deciphering the biology of Mycobacterium tuberculosis from the complete genome sequence.</title>
        <authorList>
            <person name="Cole S.T."/>
            <person name="Brosch R."/>
            <person name="Parkhill J."/>
            <person name="Garnier T."/>
            <person name="Churcher C.M."/>
            <person name="Harris D.E."/>
            <person name="Gordon S.V."/>
            <person name="Eiglmeier K."/>
            <person name="Gas S."/>
            <person name="Barry C.E. III"/>
            <person name="Tekaia F."/>
            <person name="Badcock K."/>
            <person name="Basham D."/>
            <person name="Brown D."/>
            <person name="Chillingworth T."/>
            <person name="Connor R."/>
            <person name="Davies R.M."/>
            <person name="Devlin K."/>
            <person name="Feltwell T."/>
            <person name="Gentles S."/>
            <person name="Hamlin N."/>
            <person name="Holroyd S."/>
            <person name="Hornsby T."/>
            <person name="Jagels K."/>
            <person name="Krogh A."/>
            <person name="McLean J."/>
            <person name="Moule S."/>
            <person name="Murphy L.D."/>
            <person name="Oliver S."/>
            <person name="Osborne J."/>
            <person name="Quail M.A."/>
            <person name="Rajandream M.A."/>
            <person name="Rogers J."/>
            <person name="Rutter S."/>
            <person name="Seeger K."/>
            <person name="Skelton S."/>
            <person name="Squares S."/>
            <person name="Squares R."/>
            <person name="Sulston J.E."/>
            <person name="Taylor K."/>
            <person name="Whitehead S."/>
            <person name="Barrell B.G."/>
        </authorList>
    </citation>
    <scope>NUCLEOTIDE SEQUENCE [LARGE SCALE GENOMIC DNA]</scope>
    <source>
        <strain>ATCC 25618 / H37Rv</strain>
    </source>
</reference>
<reference key="2">
    <citation type="journal article" date="2011" name="Mol. Cell. Proteomics">
        <title>Proteogenomic analysis of Mycobacterium tuberculosis by high resolution mass spectrometry.</title>
        <authorList>
            <person name="Kelkar D.S."/>
            <person name="Kumar D."/>
            <person name="Kumar P."/>
            <person name="Balakrishnan L."/>
            <person name="Muthusamy B."/>
            <person name="Yadav A.K."/>
            <person name="Shrivastava P."/>
            <person name="Marimuthu A."/>
            <person name="Anand S."/>
            <person name="Sundaram H."/>
            <person name="Kingsbury R."/>
            <person name="Harsha H.C."/>
            <person name="Nair B."/>
            <person name="Prasad T.S."/>
            <person name="Chauhan D.S."/>
            <person name="Katoch K."/>
            <person name="Katoch V.M."/>
            <person name="Kumar P."/>
            <person name="Chaerkady R."/>
            <person name="Ramachandran S."/>
            <person name="Dash D."/>
            <person name="Pandey A."/>
        </authorList>
    </citation>
    <scope>ACETYLATION [LARGE SCALE ANALYSIS] AT SER-2</scope>
    <scope>CLEAVAGE OF INITIATOR METHIONINE [LARGE SCALE ANALYSIS]</scope>
    <scope>IDENTIFICATION BY MASS SPECTROMETRY [LARGE SCALE ANALYSIS]</scope>
    <source>
        <strain>ATCC 25618 / H37Rv</strain>
    </source>
</reference>
<proteinExistence type="evidence at protein level"/>
<evidence type="ECO:0000255" key="1">
    <source>
        <dbReference type="HAMAP-Rule" id="MF_01212"/>
    </source>
</evidence>
<evidence type="ECO:0000255" key="2">
    <source>
        <dbReference type="PROSITE-ProRule" id="PRU01175"/>
    </source>
</evidence>
<evidence type="ECO:0000256" key="3">
    <source>
        <dbReference type="SAM" id="MobiDB-lite"/>
    </source>
</evidence>
<evidence type="ECO:0007744" key="4">
    <source>
    </source>
</evidence>
<keyword id="KW-0007">Acetylation</keyword>
<keyword id="KW-0378">Hydrolase</keyword>
<keyword id="KW-1185">Reference proteome</keyword>
<protein>
    <recommendedName>
        <fullName evidence="1">Deoxyguanosinetriphosphate triphosphohydrolase-like protein</fullName>
    </recommendedName>
</protein>
<comment type="similarity">
    <text evidence="1">Belongs to the dGTPase family. Type 2 subfamily.</text>
</comment>
<gene>
    <name type="primary">dgt</name>
    <name type="ordered locus">Rv2344c</name>
    <name type="ORF">MTCY98.13c</name>
</gene>
<feature type="initiator methionine" description="Removed" evidence="4">
    <location>
        <position position="1"/>
    </location>
</feature>
<feature type="chain" id="PRO_0000205310" description="Deoxyguanosinetriphosphate triphosphohydrolase-like protein">
    <location>
        <begin position="2"/>
        <end position="431"/>
    </location>
</feature>
<feature type="domain" description="HD" evidence="2">
    <location>
        <begin position="72"/>
        <end position="222"/>
    </location>
</feature>
<feature type="region of interest" description="Disordered" evidence="3">
    <location>
        <begin position="1"/>
        <end position="36"/>
    </location>
</feature>
<feature type="compositionally biased region" description="Basic and acidic residues" evidence="3">
    <location>
        <begin position="1"/>
        <end position="20"/>
    </location>
</feature>
<feature type="modified residue" description="N-acetylserine" evidence="4">
    <location>
        <position position="2"/>
    </location>
</feature>
<sequence>MSASEHDPYDDFDRQRRVAEAPKTAGLPGTEGQYRSDFARDRARVLHSAALRRLADKTQVVGPREGDTPRTRLTHSLEVAQIGRGMAIGLGCDLDLVELAGLAHDIGHPPYGHNGERALDEVAASHGGFEGNAQNFRILTSLEPKVVDAQGLSAGLNLTRASLDAVTKYPWMRGDGLGSQRRKFGFYDDDRESAVWVRQGAPPERACLEAQVMDWADDVAYSVHDVEDGVVSERIDLRVLAAEEDAAALARLGEREFSRVSADELMAAARRLSRLPVVAAVGKYDATLSASVALKRLTSELVGRFASAAIATTRAAAGPGPLVRFRADLQVPDLVRAEVAVLKILALQFIMSDPRHLETQARQRERIHRVAHRLYSGAPQTLDPVYAAAFNTAADDAARLRVVVDQIASYTEGRLERIDADQLGVSRNALD</sequence>
<dbReference type="EMBL" id="AL123456">
    <property type="protein sequence ID" value="CCP45132.1"/>
    <property type="molecule type" value="Genomic_DNA"/>
</dbReference>
<dbReference type="PIR" id="A70662">
    <property type="entry name" value="A70662"/>
</dbReference>
<dbReference type="RefSeq" id="NP_216860.1">
    <property type="nucleotide sequence ID" value="NC_000962.3"/>
</dbReference>
<dbReference type="RefSeq" id="WP_003899281.1">
    <property type="nucleotide sequence ID" value="NZ_NVQJ01000012.1"/>
</dbReference>
<dbReference type="SMR" id="P9WNY7"/>
<dbReference type="FunCoup" id="P9WNY7">
    <property type="interactions" value="36"/>
</dbReference>
<dbReference type="STRING" id="83332.Rv2344c"/>
<dbReference type="iPTMnet" id="P9WNY7"/>
<dbReference type="PaxDb" id="83332-Rv2344c"/>
<dbReference type="DNASU" id="885421"/>
<dbReference type="GeneID" id="885421"/>
<dbReference type="KEGG" id="mtu:Rv2344c"/>
<dbReference type="KEGG" id="mtv:RVBD_2344c"/>
<dbReference type="TubercuList" id="Rv2344c"/>
<dbReference type="eggNOG" id="COG0232">
    <property type="taxonomic scope" value="Bacteria"/>
</dbReference>
<dbReference type="InParanoid" id="P9WNY7"/>
<dbReference type="OrthoDB" id="9803619at2"/>
<dbReference type="PhylomeDB" id="P9WNY7"/>
<dbReference type="Proteomes" id="UP000001584">
    <property type="component" value="Chromosome"/>
</dbReference>
<dbReference type="GO" id="GO:0005886">
    <property type="term" value="C:plasma membrane"/>
    <property type="evidence" value="ECO:0007005"/>
    <property type="project" value="MTBBASE"/>
</dbReference>
<dbReference type="GO" id="GO:0008832">
    <property type="term" value="F:dGTPase activity"/>
    <property type="evidence" value="ECO:0000318"/>
    <property type="project" value="GO_Central"/>
</dbReference>
<dbReference type="GO" id="GO:0006203">
    <property type="term" value="P:dGTP catabolic process"/>
    <property type="evidence" value="ECO:0000318"/>
    <property type="project" value="GO_Central"/>
</dbReference>
<dbReference type="CDD" id="cd00077">
    <property type="entry name" value="HDc"/>
    <property type="match status" value="1"/>
</dbReference>
<dbReference type="FunFam" id="1.10.3210.10:FF:000029">
    <property type="entry name" value="Deoxyguanosinetriphosphate triphosphohydrolase-like protein"/>
    <property type="match status" value="1"/>
</dbReference>
<dbReference type="Gene3D" id="1.10.3210.10">
    <property type="entry name" value="Hypothetical protein af1432"/>
    <property type="match status" value="1"/>
</dbReference>
<dbReference type="HAMAP" id="MF_01212">
    <property type="entry name" value="dGTPase_type2"/>
    <property type="match status" value="1"/>
</dbReference>
<dbReference type="InterPro" id="IPR006261">
    <property type="entry name" value="dGTPase"/>
</dbReference>
<dbReference type="InterPro" id="IPR050135">
    <property type="entry name" value="dGTPase-like"/>
</dbReference>
<dbReference type="InterPro" id="IPR023023">
    <property type="entry name" value="dNTPase_2"/>
</dbReference>
<dbReference type="InterPro" id="IPR003607">
    <property type="entry name" value="HD/PDEase_dom"/>
</dbReference>
<dbReference type="InterPro" id="IPR006674">
    <property type="entry name" value="HD_domain"/>
</dbReference>
<dbReference type="InterPro" id="IPR026875">
    <property type="entry name" value="PHydrolase_assoc_dom"/>
</dbReference>
<dbReference type="NCBIfam" id="TIGR01353">
    <property type="entry name" value="dGTP_triPase"/>
    <property type="match status" value="1"/>
</dbReference>
<dbReference type="NCBIfam" id="NF002829">
    <property type="entry name" value="PRK03007.1"/>
    <property type="match status" value="1"/>
</dbReference>
<dbReference type="PANTHER" id="PTHR11373:SF32">
    <property type="entry name" value="DEOXYGUANOSINETRIPHOSPHATE TRIPHOSPHOHYDROLASE"/>
    <property type="match status" value="1"/>
</dbReference>
<dbReference type="PANTHER" id="PTHR11373">
    <property type="entry name" value="DEOXYNUCLEOSIDE TRIPHOSPHATE TRIPHOSPHOHYDROLASE"/>
    <property type="match status" value="1"/>
</dbReference>
<dbReference type="Pfam" id="PF01966">
    <property type="entry name" value="HD"/>
    <property type="match status" value="1"/>
</dbReference>
<dbReference type="Pfam" id="PF13286">
    <property type="entry name" value="HD_assoc"/>
    <property type="match status" value="1"/>
</dbReference>
<dbReference type="SMART" id="SM00471">
    <property type="entry name" value="HDc"/>
    <property type="match status" value="1"/>
</dbReference>
<dbReference type="SUPFAM" id="SSF109604">
    <property type="entry name" value="HD-domain/PDEase-like"/>
    <property type="match status" value="1"/>
</dbReference>
<dbReference type="PROSITE" id="PS51831">
    <property type="entry name" value="HD"/>
    <property type="match status" value="1"/>
</dbReference>
<accession>P9WNY7</accession>
<accession>L0TC18</accession>
<accession>P0A540</accession>
<accession>P95240</accession>
<organism>
    <name type="scientific">Mycobacterium tuberculosis (strain ATCC 25618 / H37Rv)</name>
    <dbReference type="NCBI Taxonomy" id="83332"/>
    <lineage>
        <taxon>Bacteria</taxon>
        <taxon>Bacillati</taxon>
        <taxon>Actinomycetota</taxon>
        <taxon>Actinomycetes</taxon>
        <taxon>Mycobacteriales</taxon>
        <taxon>Mycobacteriaceae</taxon>
        <taxon>Mycobacterium</taxon>
        <taxon>Mycobacterium tuberculosis complex</taxon>
    </lineage>
</organism>
<name>DGTL1_MYCTU</name>